<evidence type="ECO:0000250" key="1"/>
<evidence type="ECO:0000305" key="2"/>
<sequence length="142" mass="15498">MSYTHILVAVAVTPESHQLLAKAVSIARPVQAKVSLITLASDPELYNQFAAPMMEDLRAVMHEETENFLKMLGEKADYPIEQTFIASGELSQHILAVCRKHHVDLVICGNHNHSFFSRASCSAKSVVSASQVDVLLVPLAGD</sequence>
<keyword id="KW-0963">Cytoplasm</keyword>
<keyword id="KW-1185">Reference proteome</keyword>
<reference key="1">
    <citation type="journal article" date="1999" name="Genes Genet. Syst.">
        <title>Structure and transcriptional control of the flagellar master operon of Salmonella typhimurium.</title>
        <authorList>
            <person name="Yanagihara S."/>
            <person name="Iyoda S."/>
            <person name="Ohnishi K."/>
            <person name="Iino T."/>
            <person name="Kutsukake K."/>
        </authorList>
    </citation>
    <scope>NUCLEOTIDE SEQUENCE [GENOMIC DNA]</scope>
</reference>
<reference key="2">
    <citation type="journal article" date="2001" name="Nature">
        <title>Complete genome sequence of Salmonella enterica serovar Typhimurium LT2.</title>
        <authorList>
            <person name="McClelland M."/>
            <person name="Sanderson K.E."/>
            <person name="Spieth J."/>
            <person name="Clifton S.W."/>
            <person name="Latreille P."/>
            <person name="Courtney L."/>
            <person name="Porwollik S."/>
            <person name="Ali J."/>
            <person name="Dante M."/>
            <person name="Du F."/>
            <person name="Hou S."/>
            <person name="Layman D."/>
            <person name="Leonard S."/>
            <person name="Nguyen C."/>
            <person name="Scott K."/>
            <person name="Holmes A."/>
            <person name="Grewal N."/>
            <person name="Mulvaney E."/>
            <person name="Ryan E."/>
            <person name="Sun H."/>
            <person name="Florea L."/>
            <person name="Miller W."/>
            <person name="Stoneking T."/>
            <person name="Nhan M."/>
            <person name="Waterston R."/>
            <person name="Wilson R.K."/>
        </authorList>
    </citation>
    <scope>NUCLEOTIDE SEQUENCE [LARGE SCALE GENOMIC DNA]</scope>
    <source>
        <strain>LT2 / SGSC1412 / ATCC 700720</strain>
    </source>
</reference>
<protein>
    <recommendedName>
        <fullName>Universal stress protein C</fullName>
    </recommendedName>
</protein>
<accession>Q9RM66</accession>
<feature type="chain" id="PRO_0000147412" description="Universal stress protein C">
    <location>
        <begin position="1"/>
        <end position="142"/>
    </location>
</feature>
<name>USPC_SALTY</name>
<gene>
    <name type="primary">uspC</name>
    <name type="synonym">uspS</name>
    <name type="ordered locus">STM1927</name>
</gene>
<comment type="function">
    <text evidence="1">Required for resistance to DNA-damaging agents.</text>
</comment>
<comment type="subcellular location">
    <subcellularLocation>
        <location evidence="1">Cytoplasm</location>
    </subcellularLocation>
</comment>
<comment type="similarity">
    <text evidence="2">Belongs to the universal stress protein A family.</text>
</comment>
<dbReference type="EMBL" id="D43640">
    <property type="protein sequence ID" value="BAA85313.1"/>
    <property type="molecule type" value="Genomic_DNA"/>
</dbReference>
<dbReference type="EMBL" id="AE006468">
    <property type="protein sequence ID" value="AAL20843.1"/>
    <property type="molecule type" value="Genomic_DNA"/>
</dbReference>
<dbReference type="RefSeq" id="WP_000122606.1">
    <property type="nucleotide sequence ID" value="NC_003197.2"/>
</dbReference>
<dbReference type="SMR" id="Q9RM66"/>
<dbReference type="STRING" id="99287.STM1927"/>
<dbReference type="PaxDb" id="99287-STM1927"/>
<dbReference type="KEGG" id="stm:STM1927"/>
<dbReference type="PATRIC" id="fig|99287.12.peg.2044"/>
<dbReference type="HOGENOM" id="CLU_049301_18_1_6"/>
<dbReference type="OMA" id="CGNHNQS"/>
<dbReference type="PhylomeDB" id="Q9RM66"/>
<dbReference type="BioCyc" id="SENT99287:STM1927-MONOMER"/>
<dbReference type="Proteomes" id="UP000001014">
    <property type="component" value="Chromosome"/>
</dbReference>
<dbReference type="GO" id="GO:0005737">
    <property type="term" value="C:cytoplasm"/>
    <property type="evidence" value="ECO:0007669"/>
    <property type="project" value="UniProtKB-SubCell"/>
</dbReference>
<dbReference type="GO" id="GO:0006950">
    <property type="term" value="P:response to stress"/>
    <property type="evidence" value="ECO:0000318"/>
    <property type="project" value="GO_Central"/>
</dbReference>
<dbReference type="Gene3D" id="3.40.50.620">
    <property type="entry name" value="HUPs"/>
    <property type="match status" value="1"/>
</dbReference>
<dbReference type="InterPro" id="IPR014729">
    <property type="entry name" value="Rossmann-like_a/b/a_fold"/>
</dbReference>
<dbReference type="InterPro" id="IPR006015">
    <property type="entry name" value="Universal_stress_UspA"/>
</dbReference>
<dbReference type="InterPro" id="IPR006016">
    <property type="entry name" value="UspA"/>
</dbReference>
<dbReference type="NCBIfam" id="NF007512">
    <property type="entry name" value="PRK10116.1"/>
    <property type="match status" value="1"/>
</dbReference>
<dbReference type="PANTHER" id="PTHR46268">
    <property type="entry name" value="STRESS RESPONSE PROTEIN NHAX"/>
    <property type="match status" value="1"/>
</dbReference>
<dbReference type="PANTHER" id="PTHR46268:SF16">
    <property type="entry name" value="UNIVERSAL STRESS PROTEIN C"/>
    <property type="match status" value="1"/>
</dbReference>
<dbReference type="Pfam" id="PF00582">
    <property type="entry name" value="Usp"/>
    <property type="match status" value="1"/>
</dbReference>
<dbReference type="PIRSF" id="PIRSF006276">
    <property type="entry name" value="UspA"/>
    <property type="match status" value="1"/>
</dbReference>
<dbReference type="SUPFAM" id="SSF52402">
    <property type="entry name" value="Adenine nucleotide alpha hydrolases-like"/>
    <property type="match status" value="1"/>
</dbReference>
<organism>
    <name type="scientific">Salmonella typhimurium (strain LT2 / SGSC1412 / ATCC 700720)</name>
    <dbReference type="NCBI Taxonomy" id="99287"/>
    <lineage>
        <taxon>Bacteria</taxon>
        <taxon>Pseudomonadati</taxon>
        <taxon>Pseudomonadota</taxon>
        <taxon>Gammaproteobacteria</taxon>
        <taxon>Enterobacterales</taxon>
        <taxon>Enterobacteriaceae</taxon>
        <taxon>Salmonella</taxon>
    </lineage>
</organism>
<proteinExistence type="inferred from homology"/>